<dbReference type="EMBL" id="CP001177">
    <property type="protein sequence ID" value="ACJ79436.1"/>
    <property type="molecule type" value="Genomic_DNA"/>
</dbReference>
<dbReference type="SMR" id="B7HQW8"/>
<dbReference type="KEGG" id="bcr:BCAH187_A0165"/>
<dbReference type="HOGENOM" id="CLU_135723_6_2_9"/>
<dbReference type="Proteomes" id="UP000002214">
    <property type="component" value="Chromosome"/>
</dbReference>
<dbReference type="GO" id="GO:0005737">
    <property type="term" value="C:cytoplasm"/>
    <property type="evidence" value="ECO:0007669"/>
    <property type="project" value="UniProtKB-ARBA"/>
</dbReference>
<dbReference type="GO" id="GO:1990904">
    <property type="term" value="C:ribonucleoprotein complex"/>
    <property type="evidence" value="ECO:0007669"/>
    <property type="project" value="UniProtKB-KW"/>
</dbReference>
<dbReference type="GO" id="GO:0005840">
    <property type="term" value="C:ribosome"/>
    <property type="evidence" value="ECO:0007669"/>
    <property type="project" value="UniProtKB-KW"/>
</dbReference>
<dbReference type="GO" id="GO:0003735">
    <property type="term" value="F:structural constituent of ribosome"/>
    <property type="evidence" value="ECO:0007669"/>
    <property type="project" value="InterPro"/>
</dbReference>
<dbReference type="GO" id="GO:0006412">
    <property type="term" value="P:translation"/>
    <property type="evidence" value="ECO:0007669"/>
    <property type="project" value="UniProtKB-UniRule"/>
</dbReference>
<dbReference type="HAMAP" id="MF_00251">
    <property type="entry name" value="Ribosomal_bL36"/>
    <property type="match status" value="1"/>
</dbReference>
<dbReference type="InterPro" id="IPR000473">
    <property type="entry name" value="Ribosomal_bL36"/>
</dbReference>
<dbReference type="InterPro" id="IPR035977">
    <property type="entry name" value="Ribosomal_bL36_sp"/>
</dbReference>
<dbReference type="NCBIfam" id="TIGR01022">
    <property type="entry name" value="rpmJ_bact"/>
    <property type="match status" value="1"/>
</dbReference>
<dbReference type="PANTHER" id="PTHR42888">
    <property type="entry name" value="50S RIBOSOMAL PROTEIN L36, CHLOROPLASTIC"/>
    <property type="match status" value="1"/>
</dbReference>
<dbReference type="PANTHER" id="PTHR42888:SF1">
    <property type="entry name" value="LARGE RIBOSOMAL SUBUNIT PROTEIN BL36C"/>
    <property type="match status" value="1"/>
</dbReference>
<dbReference type="Pfam" id="PF00444">
    <property type="entry name" value="Ribosomal_L36"/>
    <property type="match status" value="1"/>
</dbReference>
<dbReference type="SUPFAM" id="SSF57840">
    <property type="entry name" value="Ribosomal protein L36"/>
    <property type="match status" value="1"/>
</dbReference>
<dbReference type="PROSITE" id="PS00828">
    <property type="entry name" value="RIBOSOMAL_L36"/>
    <property type="match status" value="1"/>
</dbReference>
<gene>
    <name evidence="1" type="primary">rpmJ</name>
    <name type="ordered locus">BCAH187_A0165</name>
</gene>
<organism>
    <name type="scientific">Bacillus cereus (strain AH187)</name>
    <dbReference type="NCBI Taxonomy" id="405534"/>
    <lineage>
        <taxon>Bacteria</taxon>
        <taxon>Bacillati</taxon>
        <taxon>Bacillota</taxon>
        <taxon>Bacilli</taxon>
        <taxon>Bacillales</taxon>
        <taxon>Bacillaceae</taxon>
        <taxon>Bacillus</taxon>
        <taxon>Bacillus cereus group</taxon>
    </lineage>
</organism>
<proteinExistence type="inferred from homology"/>
<name>RL36_BACC7</name>
<keyword id="KW-0687">Ribonucleoprotein</keyword>
<keyword id="KW-0689">Ribosomal protein</keyword>
<sequence>MKVRPSVKPICEKCKVIRRRGKVMVICENPKHKQKQG</sequence>
<feature type="chain" id="PRO_1000196164" description="Large ribosomal subunit protein bL36">
    <location>
        <begin position="1"/>
        <end position="37"/>
    </location>
</feature>
<reference key="1">
    <citation type="submission" date="2008-10" db="EMBL/GenBank/DDBJ databases">
        <title>Genome sequence of Bacillus cereus AH187.</title>
        <authorList>
            <person name="Dodson R.J."/>
            <person name="Durkin A.S."/>
            <person name="Rosovitz M.J."/>
            <person name="Rasko D.A."/>
            <person name="Kolsto A.B."/>
            <person name="Okstad O.A."/>
            <person name="Ravel J."/>
            <person name="Sutton G."/>
        </authorList>
    </citation>
    <scope>NUCLEOTIDE SEQUENCE [LARGE SCALE GENOMIC DNA]</scope>
    <source>
        <strain>AH187</strain>
    </source>
</reference>
<protein>
    <recommendedName>
        <fullName evidence="1">Large ribosomal subunit protein bL36</fullName>
    </recommendedName>
    <alternativeName>
        <fullName evidence="2">50S ribosomal protein L36</fullName>
    </alternativeName>
</protein>
<evidence type="ECO:0000255" key="1">
    <source>
        <dbReference type="HAMAP-Rule" id="MF_00251"/>
    </source>
</evidence>
<evidence type="ECO:0000305" key="2"/>
<comment type="similarity">
    <text evidence="1">Belongs to the bacterial ribosomal protein bL36 family.</text>
</comment>
<accession>B7HQW8</accession>